<gene>
    <name evidence="1" type="primary">acpS</name>
    <name type="ordered locus">WS1971</name>
</gene>
<proteinExistence type="inferred from homology"/>
<accession>Q7M803</accession>
<feature type="chain" id="PRO_0000175732" description="Holo-[acyl-carrier-protein] synthase">
    <location>
        <begin position="1"/>
        <end position="118"/>
    </location>
</feature>
<feature type="binding site" evidence="1">
    <location>
        <position position="5"/>
    </location>
    <ligand>
        <name>Mg(2+)</name>
        <dbReference type="ChEBI" id="CHEBI:18420"/>
    </ligand>
</feature>
<feature type="binding site" evidence="1">
    <location>
        <position position="50"/>
    </location>
    <ligand>
        <name>Mg(2+)</name>
        <dbReference type="ChEBI" id="CHEBI:18420"/>
    </ligand>
</feature>
<dbReference type="EC" id="2.7.8.7" evidence="1"/>
<dbReference type="EMBL" id="BX571662">
    <property type="protein sequence ID" value="CAE10974.1"/>
    <property type="molecule type" value="Genomic_DNA"/>
</dbReference>
<dbReference type="RefSeq" id="WP_011139756.1">
    <property type="nucleotide sequence ID" value="NC_005090.1"/>
</dbReference>
<dbReference type="SMR" id="Q7M803"/>
<dbReference type="STRING" id="273121.WS1971"/>
<dbReference type="KEGG" id="wsu:WS1971"/>
<dbReference type="eggNOG" id="COG0736">
    <property type="taxonomic scope" value="Bacteria"/>
</dbReference>
<dbReference type="HOGENOM" id="CLU_089696_0_2_7"/>
<dbReference type="Proteomes" id="UP000000422">
    <property type="component" value="Chromosome"/>
</dbReference>
<dbReference type="GO" id="GO:0005737">
    <property type="term" value="C:cytoplasm"/>
    <property type="evidence" value="ECO:0007669"/>
    <property type="project" value="UniProtKB-SubCell"/>
</dbReference>
<dbReference type="GO" id="GO:0008897">
    <property type="term" value="F:holo-[acyl-carrier-protein] synthase activity"/>
    <property type="evidence" value="ECO:0007669"/>
    <property type="project" value="UniProtKB-UniRule"/>
</dbReference>
<dbReference type="GO" id="GO:0000287">
    <property type="term" value="F:magnesium ion binding"/>
    <property type="evidence" value="ECO:0007669"/>
    <property type="project" value="UniProtKB-UniRule"/>
</dbReference>
<dbReference type="GO" id="GO:0006633">
    <property type="term" value="P:fatty acid biosynthetic process"/>
    <property type="evidence" value="ECO:0007669"/>
    <property type="project" value="UniProtKB-UniRule"/>
</dbReference>
<dbReference type="Gene3D" id="3.90.470.20">
    <property type="entry name" value="4'-phosphopantetheinyl transferase domain"/>
    <property type="match status" value="1"/>
</dbReference>
<dbReference type="HAMAP" id="MF_00101">
    <property type="entry name" value="AcpS"/>
    <property type="match status" value="1"/>
</dbReference>
<dbReference type="InterPro" id="IPR008278">
    <property type="entry name" value="4-PPantetheinyl_Trfase_dom"/>
</dbReference>
<dbReference type="InterPro" id="IPR037143">
    <property type="entry name" value="4-PPantetheinyl_Trfase_dom_sf"/>
</dbReference>
<dbReference type="InterPro" id="IPR002582">
    <property type="entry name" value="ACPS"/>
</dbReference>
<dbReference type="InterPro" id="IPR004568">
    <property type="entry name" value="Ppantetheine-prot_Trfase_dom"/>
</dbReference>
<dbReference type="NCBIfam" id="TIGR00516">
    <property type="entry name" value="acpS"/>
    <property type="match status" value="1"/>
</dbReference>
<dbReference type="NCBIfam" id="TIGR00556">
    <property type="entry name" value="pantethn_trn"/>
    <property type="match status" value="1"/>
</dbReference>
<dbReference type="Pfam" id="PF01648">
    <property type="entry name" value="ACPS"/>
    <property type="match status" value="1"/>
</dbReference>
<dbReference type="SUPFAM" id="SSF56214">
    <property type="entry name" value="4'-phosphopantetheinyl transferase"/>
    <property type="match status" value="1"/>
</dbReference>
<comment type="function">
    <text evidence="1">Transfers the 4'-phosphopantetheine moiety from coenzyme A to a Ser of acyl-carrier-protein.</text>
</comment>
<comment type="catalytic activity">
    <reaction evidence="1">
        <text>apo-[ACP] + CoA = holo-[ACP] + adenosine 3',5'-bisphosphate + H(+)</text>
        <dbReference type="Rhea" id="RHEA:12068"/>
        <dbReference type="Rhea" id="RHEA-COMP:9685"/>
        <dbReference type="Rhea" id="RHEA-COMP:9690"/>
        <dbReference type="ChEBI" id="CHEBI:15378"/>
        <dbReference type="ChEBI" id="CHEBI:29999"/>
        <dbReference type="ChEBI" id="CHEBI:57287"/>
        <dbReference type="ChEBI" id="CHEBI:58343"/>
        <dbReference type="ChEBI" id="CHEBI:64479"/>
        <dbReference type="EC" id="2.7.8.7"/>
    </reaction>
</comment>
<comment type="cofactor">
    <cofactor evidence="1">
        <name>Mg(2+)</name>
        <dbReference type="ChEBI" id="CHEBI:18420"/>
    </cofactor>
</comment>
<comment type="subcellular location">
    <subcellularLocation>
        <location evidence="1">Cytoplasm</location>
    </subcellularLocation>
</comment>
<comment type="similarity">
    <text evidence="1">Belongs to the P-Pant transferase superfamily. AcpS family.</text>
</comment>
<keyword id="KW-0963">Cytoplasm</keyword>
<keyword id="KW-0275">Fatty acid biosynthesis</keyword>
<keyword id="KW-0276">Fatty acid metabolism</keyword>
<keyword id="KW-0444">Lipid biosynthesis</keyword>
<keyword id="KW-0443">Lipid metabolism</keyword>
<keyword id="KW-0460">Magnesium</keyword>
<keyword id="KW-0479">Metal-binding</keyword>
<keyword id="KW-1185">Reference proteome</keyword>
<keyword id="KW-0808">Transferase</keyword>
<reference key="1">
    <citation type="journal article" date="2003" name="Proc. Natl. Acad. Sci. U.S.A.">
        <title>Complete genome sequence and analysis of Wolinella succinogenes.</title>
        <authorList>
            <person name="Baar C."/>
            <person name="Eppinger M."/>
            <person name="Raddatz G."/>
            <person name="Simon J."/>
            <person name="Lanz C."/>
            <person name="Klimmek O."/>
            <person name="Nandakumar R."/>
            <person name="Gross R."/>
            <person name="Rosinus A."/>
            <person name="Keller H."/>
            <person name="Jagtap P."/>
            <person name="Linke B."/>
            <person name="Meyer F."/>
            <person name="Lederer H."/>
            <person name="Schuster S.C."/>
        </authorList>
    </citation>
    <scope>NUCLEOTIDE SEQUENCE [LARGE SCALE GENOMIC DNA]</scope>
    <source>
        <strain>ATCC 29543 / DSM 1740 / CCUG 13145 / JCM 31913 / LMG 7466 / NCTC 11488 / FDC 602W</strain>
    </source>
</reference>
<sequence>MIGIDLVSIERIEAFIAKHGQRGLERFLLPEEILLANKPETIAGFWAAKEACSKALGTGIGAEVGFHDIRLFKNPKGAPLLELSPRVKDRFEIDSCALSITHDKGFAIAVVAMEKRRA</sequence>
<name>ACPS_WOLSU</name>
<protein>
    <recommendedName>
        <fullName evidence="1">Holo-[acyl-carrier-protein] synthase</fullName>
        <shortName evidence="1">Holo-ACP synthase</shortName>
        <ecNumber evidence="1">2.7.8.7</ecNumber>
    </recommendedName>
    <alternativeName>
        <fullName evidence="1">4'-phosphopantetheinyl transferase AcpS</fullName>
    </alternativeName>
</protein>
<evidence type="ECO:0000255" key="1">
    <source>
        <dbReference type="HAMAP-Rule" id="MF_00101"/>
    </source>
</evidence>
<organism>
    <name type="scientific">Wolinella succinogenes (strain ATCC 29543 / DSM 1740 / CCUG 13145 / JCM 31913 / LMG 7466 / NCTC 11488 / FDC 602W)</name>
    <name type="common">Vibrio succinogenes</name>
    <dbReference type="NCBI Taxonomy" id="273121"/>
    <lineage>
        <taxon>Bacteria</taxon>
        <taxon>Pseudomonadati</taxon>
        <taxon>Campylobacterota</taxon>
        <taxon>Epsilonproteobacteria</taxon>
        <taxon>Campylobacterales</taxon>
        <taxon>Helicobacteraceae</taxon>
        <taxon>Wolinella</taxon>
    </lineage>
</organism>